<feature type="chain" id="PRO_0000237835" description="2-C-methyl-D-erythritol 4-phosphate cytidylyltransferase">
    <location>
        <begin position="1"/>
        <end position="265"/>
    </location>
</feature>
<feature type="region of interest" description="Disordered" evidence="2">
    <location>
        <begin position="231"/>
        <end position="265"/>
    </location>
</feature>
<feature type="compositionally biased region" description="Basic and acidic residues" evidence="2">
    <location>
        <begin position="231"/>
        <end position="241"/>
    </location>
</feature>
<feature type="compositionally biased region" description="Low complexity" evidence="2">
    <location>
        <begin position="253"/>
        <end position="265"/>
    </location>
</feature>
<feature type="site" description="Transition state stabilizer" evidence="1">
    <location>
        <position position="17"/>
    </location>
</feature>
<feature type="site" description="Transition state stabilizer" evidence="1">
    <location>
        <position position="24"/>
    </location>
</feature>
<feature type="site" description="Positions MEP for the nucleophilic attack" evidence="1">
    <location>
        <position position="157"/>
    </location>
</feature>
<feature type="site" description="Positions MEP for the nucleophilic attack" evidence="1">
    <location>
        <position position="213"/>
    </location>
</feature>
<accession>Q4UTP4</accession>
<reference key="1">
    <citation type="journal article" date="2005" name="Genome Res.">
        <title>Comparative and functional genomic analyses of the pathogenicity of phytopathogen Xanthomonas campestris pv. campestris.</title>
        <authorList>
            <person name="Qian W."/>
            <person name="Jia Y."/>
            <person name="Ren S.-X."/>
            <person name="He Y.-Q."/>
            <person name="Feng J.-X."/>
            <person name="Lu L.-F."/>
            <person name="Sun Q."/>
            <person name="Ying G."/>
            <person name="Tang D.-J."/>
            <person name="Tang H."/>
            <person name="Wu W."/>
            <person name="Hao P."/>
            <person name="Wang L."/>
            <person name="Jiang B.-L."/>
            <person name="Zeng S."/>
            <person name="Gu W.-Y."/>
            <person name="Lu G."/>
            <person name="Rong L."/>
            <person name="Tian Y."/>
            <person name="Yao Z."/>
            <person name="Fu G."/>
            <person name="Chen B."/>
            <person name="Fang R."/>
            <person name="Qiang B."/>
            <person name="Chen Z."/>
            <person name="Zhao G.-P."/>
            <person name="Tang J.-L."/>
            <person name="He C."/>
        </authorList>
    </citation>
    <scope>NUCLEOTIDE SEQUENCE [LARGE SCALE GENOMIC DNA]</scope>
    <source>
        <strain>8004</strain>
    </source>
</reference>
<keyword id="KW-0414">Isoprene biosynthesis</keyword>
<keyword id="KW-0548">Nucleotidyltransferase</keyword>
<keyword id="KW-0808">Transferase</keyword>
<protein>
    <recommendedName>
        <fullName evidence="1">2-C-methyl-D-erythritol 4-phosphate cytidylyltransferase</fullName>
        <ecNumber evidence="1">2.7.7.60</ecNumber>
    </recommendedName>
    <alternativeName>
        <fullName evidence="1">4-diphosphocytidyl-2C-methyl-D-erythritol synthase</fullName>
    </alternativeName>
    <alternativeName>
        <fullName evidence="1">MEP cytidylyltransferase</fullName>
        <shortName evidence="1">MCT</shortName>
    </alternativeName>
</protein>
<name>ISPD_XANC8</name>
<dbReference type="EC" id="2.7.7.60" evidence="1"/>
<dbReference type="EMBL" id="CP000050">
    <property type="protein sequence ID" value="AAY49579.1"/>
    <property type="molecule type" value="Genomic_DNA"/>
</dbReference>
<dbReference type="RefSeq" id="WP_011036879.1">
    <property type="nucleotide sequence ID" value="NZ_CP155948.1"/>
</dbReference>
<dbReference type="SMR" id="Q4UTP4"/>
<dbReference type="KEGG" id="xcb:XC_2529"/>
<dbReference type="HOGENOM" id="CLU_061281_3_1_6"/>
<dbReference type="UniPathway" id="UPA00056">
    <property type="reaction ID" value="UER00093"/>
</dbReference>
<dbReference type="Proteomes" id="UP000000420">
    <property type="component" value="Chromosome"/>
</dbReference>
<dbReference type="GO" id="GO:0050518">
    <property type="term" value="F:2-C-methyl-D-erythritol 4-phosphate cytidylyltransferase activity"/>
    <property type="evidence" value="ECO:0007669"/>
    <property type="project" value="UniProtKB-UniRule"/>
</dbReference>
<dbReference type="GO" id="GO:0019288">
    <property type="term" value="P:isopentenyl diphosphate biosynthetic process, methylerythritol 4-phosphate pathway"/>
    <property type="evidence" value="ECO:0007669"/>
    <property type="project" value="UniProtKB-UniRule"/>
</dbReference>
<dbReference type="CDD" id="cd02516">
    <property type="entry name" value="CDP-ME_synthetase"/>
    <property type="match status" value="1"/>
</dbReference>
<dbReference type="FunFam" id="3.90.550.10:FF:000003">
    <property type="entry name" value="2-C-methyl-D-erythritol 4-phosphate cytidylyltransferase"/>
    <property type="match status" value="1"/>
</dbReference>
<dbReference type="Gene3D" id="3.90.550.10">
    <property type="entry name" value="Spore Coat Polysaccharide Biosynthesis Protein SpsA, Chain A"/>
    <property type="match status" value="1"/>
</dbReference>
<dbReference type="HAMAP" id="MF_00108">
    <property type="entry name" value="IspD"/>
    <property type="match status" value="1"/>
</dbReference>
<dbReference type="InterPro" id="IPR001228">
    <property type="entry name" value="IspD"/>
</dbReference>
<dbReference type="InterPro" id="IPR034683">
    <property type="entry name" value="IspD/TarI"/>
</dbReference>
<dbReference type="InterPro" id="IPR050088">
    <property type="entry name" value="IspD/TarI_cytidylyltransf_bact"/>
</dbReference>
<dbReference type="InterPro" id="IPR018294">
    <property type="entry name" value="ISPD_synthase_CS"/>
</dbReference>
<dbReference type="InterPro" id="IPR029044">
    <property type="entry name" value="Nucleotide-diphossugar_trans"/>
</dbReference>
<dbReference type="NCBIfam" id="TIGR00453">
    <property type="entry name" value="ispD"/>
    <property type="match status" value="1"/>
</dbReference>
<dbReference type="PANTHER" id="PTHR32125">
    <property type="entry name" value="2-C-METHYL-D-ERYTHRITOL 4-PHOSPHATE CYTIDYLYLTRANSFERASE, CHLOROPLASTIC"/>
    <property type="match status" value="1"/>
</dbReference>
<dbReference type="PANTHER" id="PTHR32125:SF4">
    <property type="entry name" value="2-C-METHYL-D-ERYTHRITOL 4-PHOSPHATE CYTIDYLYLTRANSFERASE, CHLOROPLASTIC"/>
    <property type="match status" value="1"/>
</dbReference>
<dbReference type="Pfam" id="PF01128">
    <property type="entry name" value="IspD"/>
    <property type="match status" value="1"/>
</dbReference>
<dbReference type="SUPFAM" id="SSF53448">
    <property type="entry name" value="Nucleotide-diphospho-sugar transferases"/>
    <property type="match status" value="1"/>
</dbReference>
<dbReference type="PROSITE" id="PS01295">
    <property type="entry name" value="ISPD"/>
    <property type="match status" value="1"/>
</dbReference>
<gene>
    <name evidence="1" type="primary">ispD</name>
    <name type="ordered locus">XC_2529</name>
</gene>
<evidence type="ECO:0000255" key="1">
    <source>
        <dbReference type="HAMAP-Rule" id="MF_00108"/>
    </source>
</evidence>
<evidence type="ECO:0000256" key="2">
    <source>
        <dbReference type="SAM" id="MobiDB-lite"/>
    </source>
</evidence>
<organism>
    <name type="scientific">Xanthomonas campestris pv. campestris (strain 8004)</name>
    <dbReference type="NCBI Taxonomy" id="314565"/>
    <lineage>
        <taxon>Bacteria</taxon>
        <taxon>Pseudomonadati</taxon>
        <taxon>Pseudomonadota</taxon>
        <taxon>Gammaproteobacteria</taxon>
        <taxon>Lysobacterales</taxon>
        <taxon>Lysobacteraceae</taxon>
        <taxon>Xanthomonas</taxon>
    </lineage>
</organism>
<sequence length="265" mass="27564">MTGSVWAIVPAAGRGTRFGGAVPKQYLHAAGQPLMAYTLAALAAHPAVAGIVVAIAPDDADWPGWTAVHAKPVLTCVGGATRAASVLAGLLALPDGVRADDFVLVHDAARPNLALADLDRLLEIGRGDPVGAILAAPVRDTLKRAGDDGGIDGTEPRERLWRALTPQLFRRHQLIRGLTEASAAGVDVTDEAMAIERLGLRPLLVEGAEDNFKVTTPADLARFEFELANRDRGGASREAERSAMPSAATSVFSGARSAASGSEEV</sequence>
<comment type="function">
    <text evidence="1">Catalyzes the formation of 4-diphosphocytidyl-2-C-methyl-D-erythritol from CTP and 2-C-methyl-D-erythritol 4-phosphate (MEP).</text>
</comment>
<comment type="catalytic activity">
    <reaction evidence="1">
        <text>2-C-methyl-D-erythritol 4-phosphate + CTP + H(+) = 4-CDP-2-C-methyl-D-erythritol + diphosphate</text>
        <dbReference type="Rhea" id="RHEA:13429"/>
        <dbReference type="ChEBI" id="CHEBI:15378"/>
        <dbReference type="ChEBI" id="CHEBI:33019"/>
        <dbReference type="ChEBI" id="CHEBI:37563"/>
        <dbReference type="ChEBI" id="CHEBI:57823"/>
        <dbReference type="ChEBI" id="CHEBI:58262"/>
        <dbReference type="EC" id="2.7.7.60"/>
    </reaction>
</comment>
<comment type="pathway">
    <text evidence="1">Isoprenoid biosynthesis; isopentenyl diphosphate biosynthesis via DXP pathway; isopentenyl diphosphate from 1-deoxy-D-xylulose 5-phosphate: step 2/6.</text>
</comment>
<comment type="similarity">
    <text evidence="1">Belongs to the IspD/TarI cytidylyltransferase family. IspD subfamily.</text>
</comment>
<proteinExistence type="inferred from homology"/>